<accession>Q254D2</accession>
<proteinExistence type="inferred from homology"/>
<organism>
    <name type="scientific">Chlamydia felis (strain Fe/C-56)</name>
    <name type="common">Chlamydophila felis</name>
    <dbReference type="NCBI Taxonomy" id="264202"/>
    <lineage>
        <taxon>Bacteria</taxon>
        <taxon>Pseudomonadati</taxon>
        <taxon>Chlamydiota</taxon>
        <taxon>Chlamydiia</taxon>
        <taxon>Chlamydiales</taxon>
        <taxon>Chlamydiaceae</taxon>
        <taxon>Chlamydia/Chlamydophila group</taxon>
        <taxon>Chlamydia</taxon>
    </lineage>
</organism>
<protein>
    <recommendedName>
        <fullName evidence="1">4-hydroxy-3-methylbut-2-en-1-yl diphosphate synthase (flavodoxin)</fullName>
        <ecNumber evidence="1">1.17.7.3</ecNumber>
    </recommendedName>
    <alternativeName>
        <fullName evidence="1">1-hydroxy-2-methyl-2-(E)-butenyl 4-diphosphate synthase</fullName>
    </alternativeName>
</protein>
<gene>
    <name evidence="1" type="primary">ispG</name>
    <name type="ordered locus">CF0584</name>
</gene>
<dbReference type="EC" id="1.17.7.3" evidence="1"/>
<dbReference type="EMBL" id="AP006861">
    <property type="protein sequence ID" value="BAE81356.1"/>
    <property type="molecule type" value="Genomic_DNA"/>
</dbReference>
<dbReference type="RefSeq" id="WP_011458136.1">
    <property type="nucleotide sequence ID" value="NC_007899.1"/>
</dbReference>
<dbReference type="STRING" id="264202.CF0584"/>
<dbReference type="KEGG" id="cfe:CF0584"/>
<dbReference type="eggNOG" id="COG0821">
    <property type="taxonomic scope" value="Bacteria"/>
</dbReference>
<dbReference type="HOGENOM" id="CLU_012689_0_0_0"/>
<dbReference type="OrthoDB" id="9803214at2"/>
<dbReference type="UniPathway" id="UPA00056">
    <property type="reaction ID" value="UER00096"/>
</dbReference>
<dbReference type="Proteomes" id="UP000001260">
    <property type="component" value="Chromosome"/>
</dbReference>
<dbReference type="GO" id="GO:0051539">
    <property type="term" value="F:4 iron, 4 sulfur cluster binding"/>
    <property type="evidence" value="ECO:0007669"/>
    <property type="project" value="UniProtKB-UniRule"/>
</dbReference>
<dbReference type="GO" id="GO:0046429">
    <property type="term" value="F:4-hydroxy-3-methylbut-2-en-1-yl diphosphate synthase activity (ferredoxin)"/>
    <property type="evidence" value="ECO:0007669"/>
    <property type="project" value="UniProtKB-UniRule"/>
</dbReference>
<dbReference type="GO" id="GO:0141197">
    <property type="term" value="F:4-hydroxy-3-methylbut-2-enyl-diphosphate synthase activity (flavodoxin)"/>
    <property type="evidence" value="ECO:0007669"/>
    <property type="project" value="UniProtKB-EC"/>
</dbReference>
<dbReference type="GO" id="GO:0005506">
    <property type="term" value="F:iron ion binding"/>
    <property type="evidence" value="ECO:0007669"/>
    <property type="project" value="InterPro"/>
</dbReference>
<dbReference type="GO" id="GO:0019288">
    <property type="term" value="P:isopentenyl diphosphate biosynthetic process, methylerythritol 4-phosphate pathway"/>
    <property type="evidence" value="ECO:0007669"/>
    <property type="project" value="UniProtKB-UniRule"/>
</dbReference>
<dbReference type="GO" id="GO:0016114">
    <property type="term" value="P:terpenoid biosynthetic process"/>
    <property type="evidence" value="ECO:0007669"/>
    <property type="project" value="InterPro"/>
</dbReference>
<dbReference type="FunFam" id="3.20.20.20:FF:000005">
    <property type="entry name" value="4-hydroxy-3-methylbut-2-en-1-yl diphosphate synthase (flavodoxin)"/>
    <property type="match status" value="1"/>
</dbReference>
<dbReference type="Gene3D" id="3.20.20.20">
    <property type="entry name" value="Dihydropteroate synthase-like"/>
    <property type="match status" value="1"/>
</dbReference>
<dbReference type="Gene3D" id="3.30.413.10">
    <property type="entry name" value="Sulfite Reductase Hemoprotein, domain 1"/>
    <property type="match status" value="1"/>
</dbReference>
<dbReference type="HAMAP" id="MF_00159">
    <property type="entry name" value="IspG"/>
    <property type="match status" value="1"/>
</dbReference>
<dbReference type="InterPro" id="IPR011005">
    <property type="entry name" value="Dihydropteroate_synth-like_sf"/>
</dbReference>
<dbReference type="InterPro" id="IPR017178">
    <property type="entry name" value="IspG_atypical"/>
</dbReference>
<dbReference type="InterPro" id="IPR004588">
    <property type="entry name" value="IspG_bac-typ"/>
</dbReference>
<dbReference type="InterPro" id="IPR045854">
    <property type="entry name" value="NO2/SO3_Rdtase_4Fe4S_sf"/>
</dbReference>
<dbReference type="NCBIfam" id="TIGR00612">
    <property type="entry name" value="ispG_gcpE"/>
    <property type="match status" value="1"/>
</dbReference>
<dbReference type="NCBIfam" id="NF001912">
    <property type="entry name" value="PRK00694.1"/>
    <property type="match status" value="1"/>
</dbReference>
<dbReference type="PANTHER" id="PTHR30454">
    <property type="entry name" value="4-HYDROXY-3-METHYLBUT-2-EN-1-YL DIPHOSPHATE SYNTHASE"/>
    <property type="match status" value="1"/>
</dbReference>
<dbReference type="PANTHER" id="PTHR30454:SF0">
    <property type="entry name" value="4-HYDROXY-3-METHYLBUT-2-EN-1-YL DIPHOSPHATE SYNTHASE (FERREDOXIN), CHLOROPLASTIC"/>
    <property type="match status" value="1"/>
</dbReference>
<dbReference type="Pfam" id="PF04551">
    <property type="entry name" value="GcpE"/>
    <property type="match status" value="2"/>
</dbReference>
<dbReference type="PIRSF" id="PIRSF037336">
    <property type="entry name" value="IspG_like"/>
    <property type="match status" value="1"/>
</dbReference>
<dbReference type="SUPFAM" id="SSF56014">
    <property type="entry name" value="Nitrite and sulphite reductase 4Fe-4S domain-like"/>
    <property type="match status" value="1"/>
</dbReference>
<comment type="function">
    <text evidence="1">Converts 2C-methyl-D-erythritol 2,4-cyclodiphosphate (ME-2,4cPP) into 1-hydroxy-2-methyl-2-(E)-butenyl 4-diphosphate.</text>
</comment>
<comment type="catalytic activity">
    <reaction evidence="1">
        <text>(2E)-4-hydroxy-3-methylbut-2-enyl diphosphate + oxidized [flavodoxin] + H2O + 2 H(+) = 2-C-methyl-D-erythritol 2,4-cyclic diphosphate + reduced [flavodoxin]</text>
        <dbReference type="Rhea" id="RHEA:43604"/>
        <dbReference type="Rhea" id="RHEA-COMP:10622"/>
        <dbReference type="Rhea" id="RHEA-COMP:10623"/>
        <dbReference type="ChEBI" id="CHEBI:15377"/>
        <dbReference type="ChEBI" id="CHEBI:15378"/>
        <dbReference type="ChEBI" id="CHEBI:57618"/>
        <dbReference type="ChEBI" id="CHEBI:58210"/>
        <dbReference type="ChEBI" id="CHEBI:58483"/>
        <dbReference type="ChEBI" id="CHEBI:128753"/>
        <dbReference type="EC" id="1.17.7.3"/>
    </reaction>
</comment>
<comment type="cofactor">
    <cofactor evidence="1">
        <name>[4Fe-4S] cluster</name>
        <dbReference type="ChEBI" id="CHEBI:49883"/>
    </cofactor>
    <text evidence="1">Binds 1 [4Fe-4S] cluster.</text>
</comment>
<comment type="pathway">
    <text evidence="1">Isoprenoid biosynthesis; isopentenyl diphosphate biosynthesis via DXP pathway; isopentenyl diphosphate from 1-deoxy-D-xylulose 5-phosphate: step 5/6.</text>
</comment>
<comment type="similarity">
    <text evidence="1">Belongs to the IspG family.</text>
</comment>
<evidence type="ECO:0000255" key="1">
    <source>
        <dbReference type="HAMAP-Rule" id="MF_00159"/>
    </source>
</evidence>
<feature type="chain" id="PRO_1000011454" description="4-hydroxy-3-methylbut-2-en-1-yl diphosphate synthase (flavodoxin)">
    <location>
        <begin position="1"/>
        <end position="606"/>
    </location>
</feature>
<feature type="binding site" evidence="1">
    <location>
        <position position="513"/>
    </location>
    <ligand>
        <name>[4Fe-4S] cluster</name>
        <dbReference type="ChEBI" id="CHEBI:49883"/>
    </ligand>
</feature>
<feature type="binding site" evidence="1">
    <location>
        <position position="516"/>
    </location>
    <ligand>
        <name>[4Fe-4S] cluster</name>
        <dbReference type="ChEBI" id="CHEBI:49883"/>
    </ligand>
</feature>
<feature type="binding site" evidence="1">
    <location>
        <position position="547"/>
    </location>
    <ligand>
        <name>[4Fe-4S] cluster</name>
        <dbReference type="ChEBI" id="CHEBI:49883"/>
    </ligand>
</feature>
<feature type="binding site" evidence="1">
    <location>
        <position position="554"/>
    </location>
    <ligand>
        <name>[4Fe-4S] cluster</name>
        <dbReference type="ChEBI" id="CHEBI:49883"/>
    </ligand>
</feature>
<name>ISPG_CHLFF</name>
<sequence>MIISPFKKQTARRYTHSVKIGSLFVGSEHSIKMQSMTTTPTSDVDATVAQICSLVEAKCDIARVTVQGVKEAQACEHIKERLLTMGLDIPLVADIHFFPQAAMHVADFVDKVRINPGNFVDKRNMFSGKTYTDKNYADSLLRLEEKFSPLVEKCKRLGKAMRIGVNHGSLSERIMQRYGDTIEGMVVSALEYIKVCENLGYRDVVFSMKSSNPKVMVAAYRQLAKDLDARGWHYPLHLGVTEAGMGMDGIIKSAVGIGTLLTEGLGDTIRCSLTGCPTEEIPVCESLLKHTTIYLNLPKQENPFALENSESFVNASKKITKTTPWGSVYGVFIKLHEHHILNTTAERLLEQLGINPTNGKKDATAPEGVVIPKSFLGTSIIEKLQKHMSVFHHHEVPCLYDYNEEIWNNEQVLSAPFVHCHATPPFIHSVRSFFSKRQCEDQPVKLVFSKDLDDEYEATVSIATEFGALLLDGLGEGVILDLPNIPLPTVREIAFGTLQSAGVRLVKTEYISCPGCGRTLFDLPEVTTRIRNKTKHLVGLKIAVMGCIVNGPGEMADADFGFVGSKTGMIDLYVKHTCVKAHIPMEDAEEELFRLLQEHGVWKDPE</sequence>
<keyword id="KW-0004">4Fe-4S</keyword>
<keyword id="KW-0408">Iron</keyword>
<keyword id="KW-0411">Iron-sulfur</keyword>
<keyword id="KW-0414">Isoprene biosynthesis</keyword>
<keyword id="KW-0479">Metal-binding</keyword>
<keyword id="KW-0560">Oxidoreductase</keyword>
<reference key="1">
    <citation type="journal article" date="2006" name="DNA Res.">
        <title>Genome sequence of the cat pathogen, Chlamydophila felis.</title>
        <authorList>
            <person name="Azuma Y."/>
            <person name="Hirakawa H."/>
            <person name="Yamashita A."/>
            <person name="Cai Y."/>
            <person name="Rahman M.A."/>
            <person name="Suzuki H."/>
            <person name="Mitaku S."/>
            <person name="Toh H."/>
            <person name="Goto S."/>
            <person name="Murakami T."/>
            <person name="Sugi K."/>
            <person name="Hayashi H."/>
            <person name="Fukushi H."/>
            <person name="Hattori M."/>
            <person name="Kuhara S."/>
            <person name="Shirai M."/>
        </authorList>
    </citation>
    <scope>NUCLEOTIDE SEQUENCE [LARGE SCALE GENOMIC DNA]</scope>
    <source>
        <strain>Fe/C-56</strain>
    </source>
</reference>